<name>GATC_BARQU</name>
<proteinExistence type="inferred from homology"/>
<keyword id="KW-0067">ATP-binding</keyword>
<keyword id="KW-0436">Ligase</keyword>
<keyword id="KW-0547">Nucleotide-binding</keyword>
<keyword id="KW-0648">Protein biosynthesis</keyword>
<protein>
    <recommendedName>
        <fullName evidence="1">Aspartyl/glutamyl-tRNA(Asn/Gln) amidotransferase subunit C</fullName>
        <shortName evidence="1">Asp/Glu-ADT subunit C</shortName>
        <ecNumber evidence="1">6.3.5.-</ecNumber>
    </recommendedName>
</protein>
<evidence type="ECO:0000255" key="1">
    <source>
        <dbReference type="HAMAP-Rule" id="MF_00122"/>
    </source>
</evidence>
<accession>Q6FZS8</accession>
<organism>
    <name type="scientific">Bartonella quintana (strain Toulouse)</name>
    <name type="common">Rochalimaea quintana</name>
    <dbReference type="NCBI Taxonomy" id="283165"/>
    <lineage>
        <taxon>Bacteria</taxon>
        <taxon>Pseudomonadati</taxon>
        <taxon>Pseudomonadota</taxon>
        <taxon>Alphaproteobacteria</taxon>
        <taxon>Hyphomicrobiales</taxon>
        <taxon>Bartonellaceae</taxon>
        <taxon>Bartonella</taxon>
    </lineage>
</organism>
<gene>
    <name evidence="1" type="primary">gatC</name>
    <name type="ordered locus">BQ06350</name>
</gene>
<dbReference type="EC" id="6.3.5.-" evidence="1"/>
<dbReference type="EMBL" id="BX897700">
    <property type="protein sequence ID" value="CAF26126.1"/>
    <property type="molecule type" value="Genomic_DNA"/>
</dbReference>
<dbReference type="RefSeq" id="WP_011179389.1">
    <property type="nucleotide sequence ID" value="NC_005955.1"/>
</dbReference>
<dbReference type="SMR" id="Q6FZS8"/>
<dbReference type="GeneID" id="56533005"/>
<dbReference type="KEGG" id="bqu:BQ06350"/>
<dbReference type="eggNOG" id="COG0721">
    <property type="taxonomic scope" value="Bacteria"/>
</dbReference>
<dbReference type="HOGENOM" id="CLU_105899_2_0_5"/>
<dbReference type="OrthoDB" id="9794326at2"/>
<dbReference type="Proteomes" id="UP000000597">
    <property type="component" value="Chromosome"/>
</dbReference>
<dbReference type="GO" id="GO:0050566">
    <property type="term" value="F:asparaginyl-tRNA synthase (glutamine-hydrolyzing) activity"/>
    <property type="evidence" value="ECO:0007669"/>
    <property type="project" value="RHEA"/>
</dbReference>
<dbReference type="GO" id="GO:0005524">
    <property type="term" value="F:ATP binding"/>
    <property type="evidence" value="ECO:0007669"/>
    <property type="project" value="UniProtKB-KW"/>
</dbReference>
<dbReference type="GO" id="GO:0050567">
    <property type="term" value="F:glutaminyl-tRNA synthase (glutamine-hydrolyzing) activity"/>
    <property type="evidence" value="ECO:0007669"/>
    <property type="project" value="UniProtKB-UniRule"/>
</dbReference>
<dbReference type="GO" id="GO:0070681">
    <property type="term" value="P:glutaminyl-tRNAGln biosynthesis via transamidation"/>
    <property type="evidence" value="ECO:0007669"/>
    <property type="project" value="TreeGrafter"/>
</dbReference>
<dbReference type="GO" id="GO:0006450">
    <property type="term" value="P:regulation of translational fidelity"/>
    <property type="evidence" value="ECO:0007669"/>
    <property type="project" value="InterPro"/>
</dbReference>
<dbReference type="GO" id="GO:0006412">
    <property type="term" value="P:translation"/>
    <property type="evidence" value="ECO:0007669"/>
    <property type="project" value="UniProtKB-UniRule"/>
</dbReference>
<dbReference type="Gene3D" id="1.10.20.60">
    <property type="entry name" value="Glu-tRNAGln amidotransferase C subunit, N-terminal domain"/>
    <property type="match status" value="1"/>
</dbReference>
<dbReference type="HAMAP" id="MF_00122">
    <property type="entry name" value="GatC"/>
    <property type="match status" value="1"/>
</dbReference>
<dbReference type="InterPro" id="IPR036113">
    <property type="entry name" value="Asp/Glu-ADT_sf_sub_c"/>
</dbReference>
<dbReference type="InterPro" id="IPR003837">
    <property type="entry name" value="GatC"/>
</dbReference>
<dbReference type="NCBIfam" id="TIGR00135">
    <property type="entry name" value="gatC"/>
    <property type="match status" value="1"/>
</dbReference>
<dbReference type="PANTHER" id="PTHR15004">
    <property type="entry name" value="GLUTAMYL-TRNA(GLN) AMIDOTRANSFERASE SUBUNIT C, MITOCHONDRIAL"/>
    <property type="match status" value="1"/>
</dbReference>
<dbReference type="PANTHER" id="PTHR15004:SF0">
    <property type="entry name" value="GLUTAMYL-TRNA(GLN) AMIDOTRANSFERASE SUBUNIT C, MITOCHONDRIAL"/>
    <property type="match status" value="1"/>
</dbReference>
<dbReference type="Pfam" id="PF02686">
    <property type="entry name" value="GatC"/>
    <property type="match status" value="1"/>
</dbReference>
<dbReference type="SUPFAM" id="SSF141000">
    <property type="entry name" value="Glu-tRNAGln amidotransferase C subunit"/>
    <property type="match status" value="1"/>
</dbReference>
<reference key="1">
    <citation type="journal article" date="2004" name="Proc. Natl. Acad. Sci. U.S.A.">
        <title>The louse-borne human pathogen Bartonella quintana is a genomic derivative of the zoonotic agent Bartonella henselae.</title>
        <authorList>
            <person name="Alsmark U.C.M."/>
            <person name="Frank A.C."/>
            <person name="Karlberg E.O."/>
            <person name="Legault B.-A."/>
            <person name="Ardell D.H."/>
            <person name="Canbaeck B."/>
            <person name="Eriksson A.-S."/>
            <person name="Naeslund A.K."/>
            <person name="Handley S.A."/>
            <person name="Huvet M."/>
            <person name="La Scola B."/>
            <person name="Holmberg M."/>
            <person name="Andersson S.G.E."/>
        </authorList>
    </citation>
    <scope>NUCLEOTIDE SEQUENCE [LARGE SCALE GENOMIC DNA]</scope>
    <source>
        <strain>Toulouse</strain>
    </source>
</reference>
<sequence length="95" mass="10580">MSVDQETVKRVSHLARIAIHDDEIEPMTKELNVILGFVEQLNEVDVNGIEPLTSVMPMALRMREDSVTDGDKVADIVANAPVTEENFFLVSKVVE</sequence>
<feature type="chain" id="PRO_1000016075" description="Aspartyl/glutamyl-tRNA(Asn/Gln) amidotransferase subunit C">
    <location>
        <begin position="1"/>
        <end position="95"/>
    </location>
</feature>
<comment type="function">
    <text evidence="1">Allows the formation of correctly charged Asn-tRNA(Asn) or Gln-tRNA(Gln) through the transamidation of misacylated Asp-tRNA(Asn) or Glu-tRNA(Gln) in organisms which lack either or both of asparaginyl-tRNA or glutaminyl-tRNA synthetases. The reaction takes place in the presence of glutamine and ATP through an activated phospho-Asp-tRNA(Asn) or phospho-Glu-tRNA(Gln).</text>
</comment>
<comment type="catalytic activity">
    <reaction evidence="1">
        <text>L-glutamyl-tRNA(Gln) + L-glutamine + ATP + H2O = L-glutaminyl-tRNA(Gln) + L-glutamate + ADP + phosphate + H(+)</text>
        <dbReference type="Rhea" id="RHEA:17521"/>
        <dbReference type="Rhea" id="RHEA-COMP:9681"/>
        <dbReference type="Rhea" id="RHEA-COMP:9684"/>
        <dbReference type="ChEBI" id="CHEBI:15377"/>
        <dbReference type="ChEBI" id="CHEBI:15378"/>
        <dbReference type="ChEBI" id="CHEBI:29985"/>
        <dbReference type="ChEBI" id="CHEBI:30616"/>
        <dbReference type="ChEBI" id="CHEBI:43474"/>
        <dbReference type="ChEBI" id="CHEBI:58359"/>
        <dbReference type="ChEBI" id="CHEBI:78520"/>
        <dbReference type="ChEBI" id="CHEBI:78521"/>
        <dbReference type="ChEBI" id="CHEBI:456216"/>
    </reaction>
</comment>
<comment type="catalytic activity">
    <reaction evidence="1">
        <text>L-aspartyl-tRNA(Asn) + L-glutamine + ATP + H2O = L-asparaginyl-tRNA(Asn) + L-glutamate + ADP + phosphate + 2 H(+)</text>
        <dbReference type="Rhea" id="RHEA:14513"/>
        <dbReference type="Rhea" id="RHEA-COMP:9674"/>
        <dbReference type="Rhea" id="RHEA-COMP:9677"/>
        <dbReference type="ChEBI" id="CHEBI:15377"/>
        <dbReference type="ChEBI" id="CHEBI:15378"/>
        <dbReference type="ChEBI" id="CHEBI:29985"/>
        <dbReference type="ChEBI" id="CHEBI:30616"/>
        <dbReference type="ChEBI" id="CHEBI:43474"/>
        <dbReference type="ChEBI" id="CHEBI:58359"/>
        <dbReference type="ChEBI" id="CHEBI:78515"/>
        <dbReference type="ChEBI" id="CHEBI:78516"/>
        <dbReference type="ChEBI" id="CHEBI:456216"/>
    </reaction>
</comment>
<comment type="subunit">
    <text evidence="1">Heterotrimer of A, B and C subunits.</text>
</comment>
<comment type="similarity">
    <text evidence="1">Belongs to the GatC family.</text>
</comment>